<name>CZCR_BACCZ</name>
<evidence type="ECO:0000255" key="1">
    <source>
        <dbReference type="PROSITE-ProRule" id="PRU00253"/>
    </source>
</evidence>
<evidence type="ECO:0000305" key="2"/>
<reference key="1">
    <citation type="journal article" date="2006" name="J. Bacteriol.">
        <title>Pathogenomic sequence analysis of Bacillus cereus and Bacillus thuringiensis isolates closely related to Bacillus anthracis.</title>
        <authorList>
            <person name="Han C.S."/>
            <person name="Xie G."/>
            <person name="Challacombe J.F."/>
            <person name="Altherr M.R."/>
            <person name="Bhotika S.S."/>
            <person name="Bruce D."/>
            <person name="Campbell C.S."/>
            <person name="Campbell M.L."/>
            <person name="Chen J."/>
            <person name="Chertkov O."/>
            <person name="Cleland C."/>
            <person name="Dimitrijevic M."/>
            <person name="Doggett N.A."/>
            <person name="Fawcett J.J."/>
            <person name="Glavina T."/>
            <person name="Goodwin L.A."/>
            <person name="Hill K.K."/>
            <person name="Hitchcock P."/>
            <person name="Jackson P.J."/>
            <person name="Keim P."/>
            <person name="Kewalramani A.R."/>
            <person name="Longmire J."/>
            <person name="Lucas S."/>
            <person name="Malfatti S."/>
            <person name="McMurry K."/>
            <person name="Meincke L.J."/>
            <person name="Misra M."/>
            <person name="Moseman B.L."/>
            <person name="Mundt M."/>
            <person name="Munk A.C."/>
            <person name="Okinaka R.T."/>
            <person name="Parson-Quintana B."/>
            <person name="Reilly L.P."/>
            <person name="Richardson P."/>
            <person name="Robinson D.L."/>
            <person name="Rubin E."/>
            <person name="Saunders E."/>
            <person name="Tapia R."/>
            <person name="Tesmer J.G."/>
            <person name="Thayer N."/>
            <person name="Thompson L.S."/>
            <person name="Tice H."/>
            <person name="Ticknor L.O."/>
            <person name="Wills P.L."/>
            <person name="Brettin T.S."/>
            <person name="Gilna P."/>
        </authorList>
    </citation>
    <scope>NUCLEOTIDE SEQUENCE [LARGE SCALE GENOMIC DNA]</scope>
    <source>
        <strain>ZK / E33L</strain>
    </source>
</reference>
<organism>
    <name type="scientific">Bacillus cereus (strain ZK / E33L)</name>
    <dbReference type="NCBI Taxonomy" id="288681"/>
    <lineage>
        <taxon>Bacteria</taxon>
        <taxon>Bacillati</taxon>
        <taxon>Bacillota</taxon>
        <taxon>Bacilli</taxon>
        <taxon>Bacillales</taxon>
        <taxon>Bacillaceae</taxon>
        <taxon>Bacillus</taxon>
        <taxon>Bacillus cereus group</taxon>
    </lineage>
</organism>
<proteinExistence type="inferred from homology"/>
<protein>
    <recommendedName>
        <fullName>HTH-type transcriptional regulator CzcR</fullName>
    </recommendedName>
</protein>
<dbReference type="EMBL" id="CP000001">
    <property type="protein sequence ID" value="AAU20038.1"/>
    <property type="molecule type" value="Genomic_DNA"/>
</dbReference>
<dbReference type="RefSeq" id="WP_000423054.1">
    <property type="nucleotide sequence ID" value="NZ_CP009968.1"/>
</dbReference>
<dbReference type="SMR" id="Q63H01"/>
<dbReference type="KEGG" id="bcz:BCE33L0195"/>
<dbReference type="PATRIC" id="fig|288681.22.peg.5431"/>
<dbReference type="Proteomes" id="UP000002612">
    <property type="component" value="Chromosome"/>
</dbReference>
<dbReference type="GO" id="GO:0003700">
    <property type="term" value="F:DNA-binding transcription factor activity"/>
    <property type="evidence" value="ECO:0007669"/>
    <property type="project" value="InterPro"/>
</dbReference>
<dbReference type="GO" id="GO:0000976">
    <property type="term" value="F:transcription cis-regulatory region binding"/>
    <property type="evidence" value="ECO:0007669"/>
    <property type="project" value="TreeGrafter"/>
</dbReference>
<dbReference type="CDD" id="cd08442">
    <property type="entry name" value="PBP2_YofA_SoxR_like"/>
    <property type="match status" value="1"/>
</dbReference>
<dbReference type="FunFam" id="1.10.10.10:FF:000001">
    <property type="entry name" value="LysR family transcriptional regulator"/>
    <property type="match status" value="1"/>
</dbReference>
<dbReference type="Gene3D" id="3.40.190.290">
    <property type="match status" value="1"/>
</dbReference>
<dbReference type="Gene3D" id="1.10.10.10">
    <property type="entry name" value="Winged helix-like DNA-binding domain superfamily/Winged helix DNA-binding domain"/>
    <property type="match status" value="1"/>
</dbReference>
<dbReference type="InterPro" id="IPR005119">
    <property type="entry name" value="LysR_subst-bd"/>
</dbReference>
<dbReference type="InterPro" id="IPR000847">
    <property type="entry name" value="Tscrpt_reg_HTH_LysR"/>
</dbReference>
<dbReference type="InterPro" id="IPR036388">
    <property type="entry name" value="WH-like_DNA-bd_sf"/>
</dbReference>
<dbReference type="InterPro" id="IPR036390">
    <property type="entry name" value="WH_DNA-bd_sf"/>
</dbReference>
<dbReference type="PANTHER" id="PTHR30126">
    <property type="entry name" value="HTH-TYPE TRANSCRIPTIONAL REGULATOR"/>
    <property type="match status" value="1"/>
</dbReference>
<dbReference type="PANTHER" id="PTHR30126:SF40">
    <property type="entry name" value="HTH-TYPE TRANSCRIPTIONAL REGULATOR GLTR"/>
    <property type="match status" value="1"/>
</dbReference>
<dbReference type="Pfam" id="PF00126">
    <property type="entry name" value="HTH_1"/>
    <property type="match status" value="1"/>
</dbReference>
<dbReference type="Pfam" id="PF03466">
    <property type="entry name" value="LysR_substrate"/>
    <property type="match status" value="1"/>
</dbReference>
<dbReference type="PRINTS" id="PR00039">
    <property type="entry name" value="HTHLYSR"/>
</dbReference>
<dbReference type="SUPFAM" id="SSF53850">
    <property type="entry name" value="Periplasmic binding protein-like II"/>
    <property type="match status" value="1"/>
</dbReference>
<dbReference type="SUPFAM" id="SSF46785">
    <property type="entry name" value="Winged helix' DNA-binding domain"/>
    <property type="match status" value="1"/>
</dbReference>
<dbReference type="PROSITE" id="PS50931">
    <property type="entry name" value="HTH_LYSR"/>
    <property type="match status" value="1"/>
</dbReference>
<comment type="similarity">
    <text evidence="2">Belongs to the LysR transcriptional regulatory family.</text>
</comment>
<accession>Q63H01</accession>
<feature type="chain" id="PRO_0000334141" description="HTH-type transcriptional regulator CzcR">
    <location>
        <begin position="1"/>
        <end position="288"/>
    </location>
</feature>
<feature type="domain" description="HTH lysR-type" evidence="1">
    <location>
        <begin position="1"/>
        <end position="58"/>
    </location>
</feature>
<feature type="DNA-binding region" description="H-T-H motif" evidence="1">
    <location>
        <begin position="18"/>
        <end position="37"/>
    </location>
</feature>
<sequence>MELRDLQIFQSVADQGSVSSAAKELNYVQSNVTARIKQLENELKTPLFYRHKRGMTLTAEGRKMLVYVNKILQDVDELKQVFLDSETPSGILKIGTVETVSTLPTILSSYYKSYPNVDLSLQAGLTEELIREVLDHQLDGAFISGPIKHPLIEQYDVSTEKLMLVTQNKAFHIEEFTTTPLLVFNQGCGYRSKLERWLKDEGLLPKRIMEFNILETILNSVALGLGITLVPQSAVHHLSKAGKVHCHAIPEKYGSISTVFIRRKDSYMTNSMRSFLKTIEEHHHINML</sequence>
<keyword id="KW-0238">DNA-binding</keyword>
<keyword id="KW-0804">Transcription</keyword>
<keyword id="KW-0805">Transcription regulation</keyword>
<gene>
    <name type="primary">czcR</name>
    <name type="ordered locus">BCE33L0195</name>
</gene>